<sequence>MAFYRTNLPTRELFSLVSVVIVLLATNINSVQALSFNFTKLTTANSGVTFQGDAQILPSGLIALTKSSPFPPGQYFTTVGRALSSNLVPLWDSATGKAASFVTSFSFVIDTTEGPITDGLIFFIAPPGTVIPQNSTTPFLGVVDSETSINRFVGLEFDLYRNSWDPEGRHIGIDINSIISTKTVTYNLVSGSLTKVIIIYDSPSSTLSAAIIYENGKISTISQVIDLKTVLPNTVQIGLSAATLTGESYSIHSWSFVSDLETTASYVSNI</sequence>
<reference evidence="6 7" key="1">
    <citation type="journal article" date="1996" name="Plant Physiol.">
        <title>Identification of a new pea gene, PsNlec1, encoding a lectin-like glycoprotein isolated from the symbiosomes of root nodules.</title>
        <authorList>
            <person name="Kardailsky I.V."/>
            <person name="Sherrier D.J."/>
            <person name="Brewin N.J."/>
        </authorList>
    </citation>
    <scope>NUCLEOTIDE SEQUENCE [MRNA]</scope>
    <scope>PROTEIN SEQUENCE OF 42-56</scope>
    <scope>TISSUE SPECIFICITY</scope>
    <scope>DEVELOPMENTAL STAGE</scope>
    <scope>GLYCOSYLATION</scope>
    <source>
        <strain evidence="7">cv. Wisconsin Perfection</strain>
        <tissue evidence="7">Root nodule</tissue>
    </source>
</reference>
<reference evidence="6" key="2">
    <citation type="journal article" date="1997" name="Plant Physiol.">
        <title>Immunolocalization of PsNLEC-1, a lectin-like glycoprotein expressed in developing pea nodules.</title>
        <authorList>
            <person name="Dahiya P."/>
            <person name="Kardailsky I.V."/>
            <person name="Brewin N.J."/>
        </authorList>
    </citation>
    <scope>PARTIAL PROTEIN SEQUENCE</scope>
    <scope>SUBCELLULAR LOCATION</scope>
    <scope>GLYCOSYLATION</scope>
</reference>
<reference evidence="6" key="3">
    <citation type="journal article" date="1999" name="Mol. Plant Microbe Interact.">
        <title>Transcription of a gene encoding a lectin-like glycoprotein is induced in root cells harboring arbuscular mycorrhizal fungi in Pisum sativum.</title>
        <authorList>
            <person name="Balestrini B."/>
            <person name="Perotto N."/>
            <person name="Gasverde E."/>
            <person name="Dahiya P."/>
            <person name="Guldmann L.-L."/>
            <person name="Brewin N.J."/>
            <person name="Bonfante P."/>
        </authorList>
    </citation>
    <scope>TISSUE SPECIFICITY</scope>
    <scope>INDUCTION</scope>
</reference>
<reference evidence="6" key="4">
    <citation type="journal article" date="2001" name="Mol. Plant Microbe Interact.">
        <title>Lectin-like glycoprotein PsNLEC-1 is not correctly glycosylated and targeted in boron-deficient pea nodules.</title>
        <authorList>
            <person name="Bolanos L."/>
            <person name="Cebrian A."/>
            <person name="Redondo-Nieto M."/>
            <person name="Rivilla R."/>
            <person name="Bonilla I."/>
        </authorList>
    </citation>
    <scope>FUNCTION</scope>
    <scope>GLYCOSYLATION</scope>
</reference>
<reference evidence="6" key="5">
    <citation type="journal article" date="2002" name="Proteomics">
        <title>Characterisation by proteomics of peribacteroid space and peribacteroid membrane preparations from pea (Pisum sativum) symbiosomes.</title>
        <authorList>
            <person name="Saalbach G."/>
            <person name="Erik P."/>
            <person name="Wienkoop S."/>
        </authorList>
    </citation>
    <scope>IDENTIFICATION BY MASS SPECTROMETRY</scope>
    <scope>SUBCELLULAR LOCATION</scope>
</reference>
<reference evidence="6" key="6">
    <citation type="journal article" date="2004" name="Mol. Plant Microbe Interact.">
        <title>Cell surface interactions of Rhizobium bacteroids and other bacterial strains with symbiosomal and peribacteroid membrane components from pea nodules.</title>
        <authorList>
            <person name="Bolanos L."/>
            <person name="Redondo-Nieto M."/>
            <person name="Rivilla R."/>
            <person name="Brewin N.J."/>
            <person name="Bonilla I."/>
        </authorList>
    </citation>
    <scope>SUBCELLULAR LOCATION</scope>
</reference>
<comment type="function">
    <text evidence="2">Involved in symbiosome development.</text>
</comment>
<comment type="subcellular location">
    <subcellularLocation>
        <location>Symbiosome</location>
        <location>Peribacteroid space</location>
    </subcellularLocation>
    <subcellularLocation>
        <location>Symbiosome</location>
        <location>Peribacteroid membrane</location>
    </subcellularLocation>
    <text>Also associates directly or indirectly with the cell surface of Rhizobium bacteroids within the symbiosome. Glycosylation variants NLEC-1A and NLEC-1B are abundant in the peribacterial space while NLEC-1C is probably cytoplasmic.</text>
</comment>
<comment type="tissue specificity">
    <text evidence="3 5">Expressed in nodules of Rhizobium-infected and uninfected roots and in the root stele near the nodule attachment point. In roots which have been colonized by the endomycorrhizal fungus G.versiforme, detected only in cortical cells colonized by the fungus, mainly those containing arbuscules.</text>
</comment>
<comment type="developmental stage">
    <text evidence="3">Expression increases gradually as nodules develop and then remains constant from 4 weeks to 2 months. Expressed at lower levels in senescing and non-fixing nodules.</text>
</comment>
<comment type="induction">
    <text evidence="5">By infection with the endomycorrhizal fungus G.versiforme.</text>
</comment>
<comment type="PTM">
    <text evidence="2 3 4">Glycosylated in a boron-dependent manner. Glycosylation is required for localization to symbiosomes. 3 different glycosylation variants, NLEC-1A, NLEC-1B and NLEC-1C, have been identified.</text>
</comment>
<comment type="similarity">
    <text evidence="1">Belongs to the leguminous lectin family.</text>
</comment>
<gene>
    <name type="primary">NLEC1</name>
</gene>
<name>LECR_PEA</name>
<protein>
    <recommendedName>
        <fullName>Nodule lectin</fullName>
    </recommendedName>
    <alternativeName>
        <fullName>PsNlec-1</fullName>
    </alternativeName>
</protein>
<organism>
    <name type="scientific">Pisum sativum</name>
    <name type="common">Garden pea</name>
    <name type="synonym">Lathyrus oleraceus</name>
    <dbReference type="NCBI Taxonomy" id="3888"/>
    <lineage>
        <taxon>Eukaryota</taxon>
        <taxon>Viridiplantae</taxon>
        <taxon>Streptophyta</taxon>
        <taxon>Embryophyta</taxon>
        <taxon>Tracheophyta</taxon>
        <taxon>Spermatophyta</taxon>
        <taxon>Magnoliopsida</taxon>
        <taxon>eudicotyledons</taxon>
        <taxon>Gunneridae</taxon>
        <taxon>Pentapetalae</taxon>
        <taxon>rosids</taxon>
        <taxon>fabids</taxon>
        <taxon>Fabales</taxon>
        <taxon>Fabaceae</taxon>
        <taxon>Papilionoideae</taxon>
        <taxon>50 kb inversion clade</taxon>
        <taxon>NPAAA clade</taxon>
        <taxon>Hologalegina</taxon>
        <taxon>IRL clade</taxon>
        <taxon>Fabeae</taxon>
        <taxon>Pisum</taxon>
    </lineage>
</organism>
<proteinExistence type="evidence at protein level"/>
<dbReference type="EMBL" id="U31981">
    <property type="protein sequence ID" value="AAC49367.1"/>
    <property type="molecule type" value="mRNA"/>
</dbReference>
<dbReference type="PIR" id="T06528">
    <property type="entry name" value="T06528"/>
</dbReference>
<dbReference type="SMR" id="Q40987"/>
<dbReference type="GlyCosmos" id="Q40987">
    <property type="glycosylation" value="1 site, No reported glycans"/>
</dbReference>
<dbReference type="OrthoDB" id="1423198at2759"/>
<dbReference type="GO" id="GO:0043662">
    <property type="term" value="C:peribacteroid fluid"/>
    <property type="evidence" value="ECO:0007669"/>
    <property type="project" value="UniProtKB-SubCell"/>
</dbReference>
<dbReference type="GO" id="GO:0043661">
    <property type="term" value="C:peribacteroid membrane"/>
    <property type="evidence" value="ECO:0007669"/>
    <property type="project" value="UniProtKB-SubCell"/>
</dbReference>
<dbReference type="GO" id="GO:0030246">
    <property type="term" value="F:carbohydrate binding"/>
    <property type="evidence" value="ECO:0007669"/>
    <property type="project" value="UniProtKB-KW"/>
</dbReference>
<dbReference type="GO" id="GO:0044403">
    <property type="term" value="P:biological process involved in symbiotic interaction"/>
    <property type="evidence" value="ECO:0000303"/>
    <property type="project" value="UniProtKB"/>
</dbReference>
<dbReference type="CDD" id="cd06899">
    <property type="entry name" value="lectin_legume_LecRK_Arcelin_ConA"/>
    <property type="match status" value="1"/>
</dbReference>
<dbReference type="Gene3D" id="2.60.120.200">
    <property type="match status" value="1"/>
</dbReference>
<dbReference type="InterPro" id="IPR013320">
    <property type="entry name" value="ConA-like_dom_sf"/>
</dbReference>
<dbReference type="InterPro" id="IPR016363">
    <property type="entry name" value="L-lectin"/>
</dbReference>
<dbReference type="InterPro" id="IPR001220">
    <property type="entry name" value="Legume_lectin_dom"/>
</dbReference>
<dbReference type="InterPro" id="IPR050258">
    <property type="entry name" value="Leguminous_Lectin"/>
</dbReference>
<dbReference type="PANTHER" id="PTHR32401">
    <property type="entry name" value="CONCANAVALIN A-LIKE LECTIN FAMILY PROTEIN"/>
    <property type="match status" value="1"/>
</dbReference>
<dbReference type="PANTHER" id="PTHR32401:SF49">
    <property type="entry name" value="OS10G0129200 PROTEIN"/>
    <property type="match status" value="1"/>
</dbReference>
<dbReference type="Pfam" id="PF00139">
    <property type="entry name" value="Lectin_legB"/>
    <property type="match status" value="1"/>
</dbReference>
<dbReference type="PIRSF" id="PIRSF002690">
    <property type="entry name" value="L-type_lectin_plant"/>
    <property type="match status" value="1"/>
</dbReference>
<dbReference type="SUPFAM" id="SSF49899">
    <property type="entry name" value="Concanavalin A-like lectins/glucanases"/>
    <property type="match status" value="1"/>
</dbReference>
<feature type="signal peptide" evidence="1">
    <location>
        <begin position="1"/>
        <end position="33"/>
    </location>
</feature>
<feature type="propeptide" id="PRO_0000245800" evidence="1 3">
    <location>
        <begin position="34"/>
        <end position="41"/>
    </location>
</feature>
<feature type="chain" id="PRO_0000245801" description="Nodule lectin" evidence="3">
    <location>
        <begin position="42"/>
        <end position="270"/>
    </location>
</feature>
<feature type="glycosylation site" description="N-linked (GlcNAc...) asparagine" evidence="1">
    <location>
        <position position="134"/>
    </location>
</feature>
<feature type="sequence conflict" description="In Ref. 1; AA sequence." evidence="6" ref="1">
    <original>F</original>
    <variation>L</variation>
    <location>
        <position position="50"/>
    </location>
</feature>
<accession>Q40987</accession>
<keyword id="KW-0903">Direct protein sequencing</keyword>
<keyword id="KW-0325">Glycoprotein</keyword>
<keyword id="KW-0430">Lectin</keyword>
<keyword id="KW-0472">Membrane</keyword>
<keyword id="KW-0732">Signal</keyword>
<evidence type="ECO:0000255" key="1"/>
<evidence type="ECO:0000269" key="2">
    <source>
    </source>
</evidence>
<evidence type="ECO:0000269" key="3">
    <source>
    </source>
</evidence>
<evidence type="ECO:0000269" key="4">
    <source>
    </source>
</evidence>
<evidence type="ECO:0000269" key="5">
    <source ref="3"/>
</evidence>
<evidence type="ECO:0000305" key="6"/>
<evidence type="ECO:0000312" key="7">
    <source>
        <dbReference type="EMBL" id="AAC49367.1"/>
    </source>
</evidence>